<gene>
    <name evidence="1" type="primary">yidC</name>
    <name type="ordered locus">SPC_3929</name>
</gene>
<organism>
    <name type="scientific">Salmonella paratyphi C (strain RKS4594)</name>
    <dbReference type="NCBI Taxonomy" id="476213"/>
    <lineage>
        <taxon>Bacteria</taxon>
        <taxon>Pseudomonadati</taxon>
        <taxon>Pseudomonadota</taxon>
        <taxon>Gammaproteobacteria</taxon>
        <taxon>Enterobacterales</taxon>
        <taxon>Enterobacteriaceae</taxon>
        <taxon>Salmonella</taxon>
    </lineage>
</organism>
<protein>
    <recommendedName>
        <fullName evidence="1">Membrane protein insertase YidC</fullName>
    </recommendedName>
    <alternativeName>
        <fullName evidence="1">Foldase YidC</fullName>
    </alternativeName>
    <alternativeName>
        <fullName evidence="1">Membrane integrase YidC</fullName>
    </alternativeName>
    <alternativeName>
        <fullName evidence="1">Membrane protein YidC</fullName>
    </alternativeName>
</protein>
<keyword id="KW-0997">Cell inner membrane</keyword>
<keyword id="KW-1003">Cell membrane</keyword>
<keyword id="KW-0143">Chaperone</keyword>
<keyword id="KW-0472">Membrane</keyword>
<keyword id="KW-0653">Protein transport</keyword>
<keyword id="KW-0812">Transmembrane</keyword>
<keyword id="KW-1133">Transmembrane helix</keyword>
<keyword id="KW-0813">Transport</keyword>
<evidence type="ECO:0000255" key="1">
    <source>
        <dbReference type="HAMAP-Rule" id="MF_01810"/>
    </source>
</evidence>
<evidence type="ECO:0000256" key="2">
    <source>
        <dbReference type="SAM" id="MobiDB-lite"/>
    </source>
</evidence>
<reference key="1">
    <citation type="journal article" date="2009" name="PLoS ONE">
        <title>Salmonella paratyphi C: genetic divergence from Salmonella choleraesuis and pathogenic convergence with Salmonella typhi.</title>
        <authorList>
            <person name="Liu W.-Q."/>
            <person name="Feng Y."/>
            <person name="Wang Y."/>
            <person name="Zou Q.-H."/>
            <person name="Chen F."/>
            <person name="Guo J.-T."/>
            <person name="Peng Y.-H."/>
            <person name="Jin Y."/>
            <person name="Li Y.-G."/>
            <person name="Hu S.-N."/>
            <person name="Johnston R.N."/>
            <person name="Liu G.-R."/>
            <person name="Liu S.-L."/>
        </authorList>
    </citation>
    <scope>NUCLEOTIDE SEQUENCE [LARGE SCALE GENOMIC DNA]</scope>
    <source>
        <strain>RKS4594</strain>
    </source>
</reference>
<comment type="function">
    <text evidence="1">Required for the insertion and/or proper folding and/or complex formation of integral membrane proteins into the membrane. Involved in integration of membrane proteins that insert both dependently and independently of the Sec translocase complex, as well as at least some lipoproteins. Aids folding of multispanning membrane proteins.</text>
</comment>
<comment type="subunit">
    <text evidence="1">Interacts with the Sec translocase complex via SecD. Specifically interacts with transmembrane segments of nascent integral membrane proteins during membrane integration.</text>
</comment>
<comment type="subcellular location">
    <subcellularLocation>
        <location evidence="1">Cell inner membrane</location>
        <topology evidence="1">Multi-pass membrane protein</topology>
    </subcellularLocation>
</comment>
<comment type="similarity">
    <text evidence="1">Belongs to the OXA1/ALB3/YidC family. Type 1 subfamily.</text>
</comment>
<sequence>MDSQRNLLVIALLFVSFMIWQAWEQDKNPQPQTQQTTQTTTTAAGSAADQGVPASGQGKMITVKTDVLDLTINTRGGDVEQALLPAYPKELGSNEPFQLLETTPQFIYQAQSGLTGRDGPDNPANGPRPLYNVEKDAFVLADGQNELQVPMTYTDAAGNTFTKTFVFKRGDYAVNVNYSVQNTGEKPLEVSTFGQLKQSVNLPPHRDTGSSNFALHTFRGAAYSTPDEKYEKYKFDTIADNENLNVSSKGGWVAMLQQYFATAWIPRNDGTNNFYTANLGNGIVAIGYKAQPVLVQPGQTSAMTSTLWVGPEIQDKMAAVAPHLDLTVDYGWLWFISQPLFKLLKWIHSFVGNWGFSIIIITFIVRGIMYPLTKAQYTSMAKMRMLQPKIQAMRERLGDDKQRQSQEMMALYKAEKVNPLGGCFPLIIQMPIFLALYYMLMGSIELRHAPFALWIHDLSAQDPYYILPILMGVTMFFIQKMSPTTVTDPMQQKIMTFMPVIFTVFFLWFPSGLVLYYIVSNLVTIIQQQLIYRGLEKRGLHSREKKKS</sequence>
<accession>C0Q2L3</accession>
<feature type="chain" id="PRO_1000187702" description="Membrane protein insertase YidC">
    <location>
        <begin position="1"/>
        <end position="548"/>
    </location>
</feature>
<feature type="transmembrane region" description="Helical" evidence="1">
    <location>
        <begin position="6"/>
        <end position="26"/>
    </location>
</feature>
<feature type="transmembrane region" description="Helical" evidence="1">
    <location>
        <begin position="350"/>
        <end position="370"/>
    </location>
</feature>
<feature type="transmembrane region" description="Helical" evidence="1">
    <location>
        <begin position="424"/>
        <end position="444"/>
    </location>
</feature>
<feature type="transmembrane region" description="Helical" evidence="1">
    <location>
        <begin position="458"/>
        <end position="478"/>
    </location>
</feature>
<feature type="transmembrane region" description="Helical" evidence="1">
    <location>
        <begin position="499"/>
        <end position="519"/>
    </location>
</feature>
<feature type="region of interest" description="Disordered" evidence="2">
    <location>
        <begin position="28"/>
        <end position="56"/>
    </location>
</feature>
<feature type="compositionally biased region" description="Low complexity" evidence="2">
    <location>
        <begin position="29"/>
        <end position="42"/>
    </location>
</feature>
<proteinExistence type="inferred from homology"/>
<dbReference type="EMBL" id="CP000857">
    <property type="protein sequence ID" value="ACN47999.1"/>
    <property type="molecule type" value="Genomic_DNA"/>
</dbReference>
<dbReference type="RefSeq" id="WP_000378279.1">
    <property type="nucleotide sequence ID" value="NC_012125.1"/>
</dbReference>
<dbReference type="SMR" id="C0Q2L3"/>
<dbReference type="KEGG" id="sei:SPC_3929"/>
<dbReference type="HOGENOM" id="CLU_016535_3_0_6"/>
<dbReference type="Proteomes" id="UP000001599">
    <property type="component" value="Chromosome"/>
</dbReference>
<dbReference type="GO" id="GO:0005886">
    <property type="term" value="C:plasma membrane"/>
    <property type="evidence" value="ECO:0007669"/>
    <property type="project" value="UniProtKB-SubCell"/>
</dbReference>
<dbReference type="GO" id="GO:0032977">
    <property type="term" value="F:membrane insertase activity"/>
    <property type="evidence" value="ECO:0007669"/>
    <property type="project" value="InterPro"/>
</dbReference>
<dbReference type="GO" id="GO:0051205">
    <property type="term" value="P:protein insertion into membrane"/>
    <property type="evidence" value="ECO:0007669"/>
    <property type="project" value="TreeGrafter"/>
</dbReference>
<dbReference type="GO" id="GO:0015031">
    <property type="term" value="P:protein transport"/>
    <property type="evidence" value="ECO:0007669"/>
    <property type="project" value="UniProtKB-KW"/>
</dbReference>
<dbReference type="CDD" id="cd20070">
    <property type="entry name" value="5TM_YidC_Alb3"/>
    <property type="match status" value="1"/>
</dbReference>
<dbReference type="CDD" id="cd19961">
    <property type="entry name" value="EcYidC-like_peri"/>
    <property type="match status" value="1"/>
</dbReference>
<dbReference type="FunFam" id="2.70.98.90:FF:000001">
    <property type="entry name" value="Membrane protein insertase YidC"/>
    <property type="match status" value="1"/>
</dbReference>
<dbReference type="Gene3D" id="2.70.98.90">
    <property type="match status" value="1"/>
</dbReference>
<dbReference type="HAMAP" id="MF_01810">
    <property type="entry name" value="YidC_type1"/>
    <property type="match status" value="1"/>
</dbReference>
<dbReference type="InterPro" id="IPR019998">
    <property type="entry name" value="Membr_insert_YidC"/>
</dbReference>
<dbReference type="InterPro" id="IPR028053">
    <property type="entry name" value="Membr_insert_YidC_N"/>
</dbReference>
<dbReference type="InterPro" id="IPR001708">
    <property type="entry name" value="YidC/ALB3/OXA1/COX18"/>
</dbReference>
<dbReference type="InterPro" id="IPR028055">
    <property type="entry name" value="YidC/Oxa/ALB_C"/>
</dbReference>
<dbReference type="InterPro" id="IPR047196">
    <property type="entry name" value="YidC_ALB_C"/>
</dbReference>
<dbReference type="InterPro" id="IPR038221">
    <property type="entry name" value="YidC_periplasmic_sf"/>
</dbReference>
<dbReference type="NCBIfam" id="NF002351">
    <property type="entry name" value="PRK01318.1-1"/>
    <property type="match status" value="1"/>
</dbReference>
<dbReference type="NCBIfam" id="NF002352">
    <property type="entry name" value="PRK01318.1-3"/>
    <property type="match status" value="1"/>
</dbReference>
<dbReference type="NCBIfam" id="NF002353">
    <property type="entry name" value="PRK01318.1-4"/>
    <property type="match status" value="1"/>
</dbReference>
<dbReference type="NCBIfam" id="TIGR03593">
    <property type="entry name" value="yidC_nterm"/>
    <property type="match status" value="1"/>
</dbReference>
<dbReference type="NCBIfam" id="TIGR03592">
    <property type="entry name" value="yidC_oxa1_cterm"/>
    <property type="match status" value="1"/>
</dbReference>
<dbReference type="PANTHER" id="PTHR12428:SF65">
    <property type="entry name" value="CYTOCHROME C OXIDASE ASSEMBLY PROTEIN COX18, MITOCHONDRIAL"/>
    <property type="match status" value="1"/>
</dbReference>
<dbReference type="PANTHER" id="PTHR12428">
    <property type="entry name" value="OXA1"/>
    <property type="match status" value="1"/>
</dbReference>
<dbReference type="Pfam" id="PF02096">
    <property type="entry name" value="60KD_IMP"/>
    <property type="match status" value="1"/>
</dbReference>
<dbReference type="Pfam" id="PF14849">
    <property type="entry name" value="YidC_periplas"/>
    <property type="match status" value="1"/>
</dbReference>
<dbReference type="PRINTS" id="PR00701">
    <property type="entry name" value="60KDINNERMP"/>
</dbReference>
<dbReference type="PRINTS" id="PR01900">
    <property type="entry name" value="YIDCPROTEIN"/>
</dbReference>
<name>YIDC_SALPC</name>